<accession>B9L0L0</accession>
<reference key="1">
    <citation type="journal article" date="2009" name="PLoS ONE">
        <title>Complete genome sequence of the aerobic CO-oxidizing thermophile Thermomicrobium roseum.</title>
        <authorList>
            <person name="Wu D."/>
            <person name="Raymond J."/>
            <person name="Wu M."/>
            <person name="Chatterji S."/>
            <person name="Ren Q."/>
            <person name="Graham J.E."/>
            <person name="Bryant D.A."/>
            <person name="Robb F."/>
            <person name="Colman A."/>
            <person name="Tallon L.J."/>
            <person name="Badger J.H."/>
            <person name="Madupu R."/>
            <person name="Ward N.L."/>
            <person name="Eisen J.A."/>
        </authorList>
    </citation>
    <scope>NUCLEOTIDE SEQUENCE [LARGE SCALE GENOMIC DNA]</scope>
    <source>
        <strain>ATCC 27502 / DSM 5159 / P-2</strain>
    </source>
</reference>
<proteinExistence type="inferred from homology"/>
<feature type="chain" id="PRO_1000118976" description="Transcription elongation factor GreA">
    <location>
        <begin position="1"/>
        <end position="156"/>
    </location>
</feature>
<evidence type="ECO:0000255" key="1">
    <source>
        <dbReference type="HAMAP-Rule" id="MF_00105"/>
    </source>
</evidence>
<keyword id="KW-0238">DNA-binding</keyword>
<keyword id="KW-1185">Reference proteome</keyword>
<keyword id="KW-0804">Transcription</keyword>
<keyword id="KW-0805">Transcription regulation</keyword>
<organism>
    <name type="scientific">Thermomicrobium roseum (strain ATCC 27502 / DSM 5159 / P-2)</name>
    <dbReference type="NCBI Taxonomy" id="309801"/>
    <lineage>
        <taxon>Bacteria</taxon>
        <taxon>Pseudomonadati</taxon>
        <taxon>Thermomicrobiota</taxon>
        <taxon>Thermomicrobia</taxon>
        <taxon>Thermomicrobiales</taxon>
        <taxon>Thermomicrobiaceae</taxon>
        <taxon>Thermomicrobium</taxon>
    </lineage>
</organism>
<dbReference type="EMBL" id="CP001275">
    <property type="protein sequence ID" value="ACM06127.1"/>
    <property type="molecule type" value="Genomic_DNA"/>
</dbReference>
<dbReference type="RefSeq" id="WP_015922034.1">
    <property type="nucleotide sequence ID" value="NC_011959.1"/>
</dbReference>
<dbReference type="SMR" id="B9L0L0"/>
<dbReference type="STRING" id="309801.trd_1081"/>
<dbReference type="KEGG" id="tro:trd_1081"/>
<dbReference type="eggNOG" id="COG0782">
    <property type="taxonomic scope" value="Bacteria"/>
</dbReference>
<dbReference type="HOGENOM" id="CLU_101379_2_0_0"/>
<dbReference type="OrthoDB" id="9808774at2"/>
<dbReference type="Proteomes" id="UP000000447">
    <property type="component" value="Chromosome"/>
</dbReference>
<dbReference type="GO" id="GO:0003677">
    <property type="term" value="F:DNA binding"/>
    <property type="evidence" value="ECO:0007669"/>
    <property type="project" value="UniProtKB-UniRule"/>
</dbReference>
<dbReference type="GO" id="GO:0070063">
    <property type="term" value="F:RNA polymerase binding"/>
    <property type="evidence" value="ECO:0007669"/>
    <property type="project" value="InterPro"/>
</dbReference>
<dbReference type="GO" id="GO:0006354">
    <property type="term" value="P:DNA-templated transcription elongation"/>
    <property type="evidence" value="ECO:0007669"/>
    <property type="project" value="TreeGrafter"/>
</dbReference>
<dbReference type="GO" id="GO:0032784">
    <property type="term" value="P:regulation of DNA-templated transcription elongation"/>
    <property type="evidence" value="ECO:0007669"/>
    <property type="project" value="UniProtKB-UniRule"/>
</dbReference>
<dbReference type="FunFam" id="1.10.287.180:FF:000001">
    <property type="entry name" value="Transcription elongation factor GreA"/>
    <property type="match status" value="1"/>
</dbReference>
<dbReference type="Gene3D" id="3.10.50.30">
    <property type="entry name" value="Transcription elongation factor, GreA/GreB, C-terminal domain"/>
    <property type="match status" value="1"/>
</dbReference>
<dbReference type="Gene3D" id="1.10.287.180">
    <property type="entry name" value="Transcription elongation factor, GreA/GreB, N-terminal domain"/>
    <property type="match status" value="1"/>
</dbReference>
<dbReference type="HAMAP" id="MF_00105">
    <property type="entry name" value="GreA_GreB"/>
    <property type="match status" value="1"/>
</dbReference>
<dbReference type="InterPro" id="IPR036953">
    <property type="entry name" value="GreA/GreB_C_sf"/>
</dbReference>
<dbReference type="InterPro" id="IPR018151">
    <property type="entry name" value="TF_GreA/GreB_CS"/>
</dbReference>
<dbReference type="InterPro" id="IPR006359">
    <property type="entry name" value="Tscrpt_elong_fac_GreA"/>
</dbReference>
<dbReference type="InterPro" id="IPR028624">
    <property type="entry name" value="Tscrpt_elong_fac_GreA/B"/>
</dbReference>
<dbReference type="InterPro" id="IPR001437">
    <property type="entry name" value="Tscrpt_elong_fac_GreA/B_C"/>
</dbReference>
<dbReference type="InterPro" id="IPR023459">
    <property type="entry name" value="Tscrpt_elong_fac_GreA/B_fam"/>
</dbReference>
<dbReference type="InterPro" id="IPR022691">
    <property type="entry name" value="Tscrpt_elong_fac_GreA/B_N"/>
</dbReference>
<dbReference type="InterPro" id="IPR036805">
    <property type="entry name" value="Tscrpt_elong_fac_GreA/B_N_sf"/>
</dbReference>
<dbReference type="NCBIfam" id="TIGR01462">
    <property type="entry name" value="greA"/>
    <property type="match status" value="1"/>
</dbReference>
<dbReference type="NCBIfam" id="NF001263">
    <property type="entry name" value="PRK00226.1-4"/>
    <property type="match status" value="1"/>
</dbReference>
<dbReference type="PANTHER" id="PTHR30437">
    <property type="entry name" value="TRANSCRIPTION ELONGATION FACTOR GREA"/>
    <property type="match status" value="1"/>
</dbReference>
<dbReference type="PANTHER" id="PTHR30437:SF4">
    <property type="entry name" value="TRANSCRIPTION ELONGATION FACTOR GREA"/>
    <property type="match status" value="1"/>
</dbReference>
<dbReference type="Pfam" id="PF01272">
    <property type="entry name" value="GreA_GreB"/>
    <property type="match status" value="1"/>
</dbReference>
<dbReference type="Pfam" id="PF03449">
    <property type="entry name" value="GreA_GreB_N"/>
    <property type="match status" value="1"/>
</dbReference>
<dbReference type="PIRSF" id="PIRSF006092">
    <property type="entry name" value="GreA_GreB"/>
    <property type="match status" value="1"/>
</dbReference>
<dbReference type="SUPFAM" id="SSF54534">
    <property type="entry name" value="FKBP-like"/>
    <property type="match status" value="1"/>
</dbReference>
<dbReference type="SUPFAM" id="SSF46557">
    <property type="entry name" value="GreA transcript cleavage protein, N-terminal domain"/>
    <property type="match status" value="1"/>
</dbReference>
<dbReference type="PROSITE" id="PS00830">
    <property type="entry name" value="GREAB_2"/>
    <property type="match status" value="1"/>
</dbReference>
<comment type="function">
    <text evidence="1">Necessary for efficient RNA polymerase transcription elongation past template-encoded arresting sites. The arresting sites in DNA have the property of trapping a certain fraction of elongating RNA polymerases that pass through, resulting in locked ternary complexes. Cleavage of the nascent transcript by cleavage factors such as GreA or GreB allows the resumption of elongation from the new 3'terminus. GreA releases sequences of 2 to 3 nucleotides.</text>
</comment>
<comment type="similarity">
    <text evidence="1">Belongs to the GreA/GreB family.</text>
</comment>
<gene>
    <name evidence="1" type="primary">greA</name>
    <name type="ordered locus">trd_1081</name>
</gene>
<name>GREA_THERP</name>
<protein>
    <recommendedName>
        <fullName evidence="1">Transcription elongation factor GreA</fullName>
    </recommendedName>
    <alternativeName>
        <fullName evidence="1">Transcript cleavage factor GreA</fullName>
    </alternativeName>
</protein>
<sequence>MARERIPITREGLEALRQEYEYLVKHRRPEIARVIQEAREHGDIRENAAYDAAKHDQAFIEGRIREIEELLKRVELIEQPTDGDRSVVRVGSTVTIEIDGEIETYTIVGAIEAKPSAGRISNESPVGRALLGHRAGEIVPIETPNGTLMARIIEVQ</sequence>